<feature type="chain" id="PRO_0000136022" description="Shikimate dehydrogenase (NADP(+))">
    <location>
        <begin position="1"/>
        <end position="269"/>
    </location>
</feature>
<feature type="active site" description="Proton acceptor" evidence="1">
    <location>
        <position position="68"/>
    </location>
</feature>
<feature type="binding site" evidence="1">
    <location>
        <begin position="17"/>
        <end position="19"/>
    </location>
    <ligand>
        <name>shikimate</name>
        <dbReference type="ChEBI" id="CHEBI:36208"/>
    </ligand>
</feature>
<feature type="binding site" evidence="1">
    <location>
        <position position="64"/>
    </location>
    <ligand>
        <name>shikimate</name>
        <dbReference type="ChEBI" id="CHEBI:36208"/>
    </ligand>
</feature>
<feature type="binding site" evidence="1">
    <location>
        <position position="80"/>
    </location>
    <ligand>
        <name>NADP(+)</name>
        <dbReference type="ChEBI" id="CHEBI:58349"/>
    </ligand>
</feature>
<feature type="binding site" evidence="1">
    <location>
        <position position="89"/>
    </location>
    <ligand>
        <name>shikimate</name>
        <dbReference type="ChEBI" id="CHEBI:36208"/>
    </ligand>
</feature>
<feature type="binding site" evidence="1">
    <location>
        <position position="105"/>
    </location>
    <ligand>
        <name>shikimate</name>
        <dbReference type="ChEBI" id="CHEBI:36208"/>
    </ligand>
</feature>
<feature type="binding site" evidence="1">
    <location>
        <begin position="130"/>
        <end position="134"/>
    </location>
    <ligand>
        <name>NADP(+)</name>
        <dbReference type="ChEBI" id="CHEBI:58349"/>
    </ligand>
</feature>
<feature type="binding site" evidence="1">
    <location>
        <begin position="154"/>
        <end position="159"/>
    </location>
    <ligand>
        <name>NADP(+)</name>
        <dbReference type="ChEBI" id="CHEBI:58349"/>
    </ligand>
</feature>
<feature type="binding site" evidence="1">
    <location>
        <position position="213"/>
    </location>
    <ligand>
        <name>NADP(+)</name>
        <dbReference type="ChEBI" id="CHEBI:58349"/>
    </ligand>
</feature>
<feature type="binding site" evidence="1">
    <location>
        <position position="215"/>
    </location>
    <ligand>
        <name>shikimate</name>
        <dbReference type="ChEBI" id="CHEBI:36208"/>
    </ligand>
</feature>
<feature type="binding site" evidence="1">
    <location>
        <position position="237"/>
    </location>
    <ligand>
        <name>NADP(+)</name>
        <dbReference type="ChEBI" id="CHEBI:58349"/>
    </ligand>
</feature>
<accession>P95400</accession>
<proteinExistence type="inferred from homology"/>
<comment type="function">
    <text evidence="1">Involved in the biosynthesis of the chorismate, which leads to the biosynthesis of aromatic amino acids. Catalyzes the reversible NADPH linked reduction of 3-dehydroshikimate (DHSA) to yield shikimate (SA).</text>
</comment>
<comment type="catalytic activity">
    <reaction evidence="1">
        <text>shikimate + NADP(+) = 3-dehydroshikimate + NADPH + H(+)</text>
        <dbReference type="Rhea" id="RHEA:17737"/>
        <dbReference type="ChEBI" id="CHEBI:15378"/>
        <dbReference type="ChEBI" id="CHEBI:16630"/>
        <dbReference type="ChEBI" id="CHEBI:36208"/>
        <dbReference type="ChEBI" id="CHEBI:57783"/>
        <dbReference type="ChEBI" id="CHEBI:58349"/>
        <dbReference type="EC" id="1.1.1.25"/>
    </reaction>
</comment>
<comment type="pathway">
    <text evidence="1">Metabolic intermediate biosynthesis; chorismate biosynthesis; chorismate from D-erythrose 4-phosphate and phosphoenolpyruvate: step 4/7.</text>
</comment>
<comment type="subunit">
    <text evidence="1">Homodimer.</text>
</comment>
<comment type="similarity">
    <text evidence="1">Belongs to the shikimate dehydrogenase family.</text>
</comment>
<dbReference type="EC" id="1.1.1.25" evidence="1"/>
<dbReference type="EMBL" id="U82846">
    <property type="protein sequence ID" value="AAC44917.1"/>
    <property type="molecule type" value="Genomic_DNA"/>
</dbReference>
<dbReference type="SMR" id="P95400"/>
<dbReference type="UniPathway" id="UPA00053">
    <property type="reaction ID" value="UER00087"/>
</dbReference>
<dbReference type="GO" id="GO:0005829">
    <property type="term" value="C:cytosol"/>
    <property type="evidence" value="ECO:0007669"/>
    <property type="project" value="TreeGrafter"/>
</dbReference>
<dbReference type="GO" id="GO:0050661">
    <property type="term" value="F:NADP binding"/>
    <property type="evidence" value="ECO:0007669"/>
    <property type="project" value="InterPro"/>
</dbReference>
<dbReference type="GO" id="GO:0004764">
    <property type="term" value="F:shikimate 3-dehydrogenase (NADP+) activity"/>
    <property type="evidence" value="ECO:0007669"/>
    <property type="project" value="UniProtKB-UniRule"/>
</dbReference>
<dbReference type="GO" id="GO:0008652">
    <property type="term" value="P:amino acid biosynthetic process"/>
    <property type="evidence" value="ECO:0007669"/>
    <property type="project" value="UniProtKB-KW"/>
</dbReference>
<dbReference type="GO" id="GO:0009073">
    <property type="term" value="P:aromatic amino acid family biosynthetic process"/>
    <property type="evidence" value="ECO:0007669"/>
    <property type="project" value="UniProtKB-KW"/>
</dbReference>
<dbReference type="GO" id="GO:0009423">
    <property type="term" value="P:chorismate biosynthetic process"/>
    <property type="evidence" value="ECO:0007669"/>
    <property type="project" value="UniProtKB-UniRule"/>
</dbReference>
<dbReference type="GO" id="GO:0019632">
    <property type="term" value="P:shikimate metabolic process"/>
    <property type="evidence" value="ECO:0007669"/>
    <property type="project" value="InterPro"/>
</dbReference>
<dbReference type="CDD" id="cd01065">
    <property type="entry name" value="NAD_bind_Shikimate_DH"/>
    <property type="match status" value="1"/>
</dbReference>
<dbReference type="FunFam" id="3.40.50.10860:FF:000006">
    <property type="entry name" value="Shikimate dehydrogenase (NADP(+))"/>
    <property type="match status" value="1"/>
</dbReference>
<dbReference type="Gene3D" id="3.40.50.10860">
    <property type="entry name" value="Leucine Dehydrogenase, chain A, domain 1"/>
    <property type="match status" value="1"/>
</dbReference>
<dbReference type="Gene3D" id="3.40.50.720">
    <property type="entry name" value="NAD(P)-binding Rossmann-like Domain"/>
    <property type="match status" value="1"/>
</dbReference>
<dbReference type="HAMAP" id="MF_00222">
    <property type="entry name" value="Shikimate_DH_AroE"/>
    <property type="match status" value="1"/>
</dbReference>
<dbReference type="InterPro" id="IPR046346">
    <property type="entry name" value="Aminoacid_DH-like_N_sf"/>
</dbReference>
<dbReference type="InterPro" id="IPR036291">
    <property type="entry name" value="NAD(P)-bd_dom_sf"/>
</dbReference>
<dbReference type="InterPro" id="IPR041121">
    <property type="entry name" value="SDH_C"/>
</dbReference>
<dbReference type="InterPro" id="IPR011342">
    <property type="entry name" value="Shikimate_DH"/>
</dbReference>
<dbReference type="InterPro" id="IPR013708">
    <property type="entry name" value="Shikimate_DH-bd_N"/>
</dbReference>
<dbReference type="InterPro" id="IPR022893">
    <property type="entry name" value="Shikimate_DH_fam"/>
</dbReference>
<dbReference type="InterPro" id="IPR006151">
    <property type="entry name" value="Shikm_DH/Glu-tRNA_Rdtase"/>
</dbReference>
<dbReference type="NCBIfam" id="TIGR00507">
    <property type="entry name" value="aroE"/>
    <property type="match status" value="1"/>
</dbReference>
<dbReference type="NCBIfam" id="NF001310">
    <property type="entry name" value="PRK00258.1-2"/>
    <property type="match status" value="1"/>
</dbReference>
<dbReference type="PANTHER" id="PTHR21089:SF1">
    <property type="entry name" value="BIFUNCTIONAL 3-DEHYDROQUINATE DEHYDRATASE_SHIKIMATE DEHYDROGENASE, CHLOROPLASTIC"/>
    <property type="match status" value="1"/>
</dbReference>
<dbReference type="PANTHER" id="PTHR21089">
    <property type="entry name" value="SHIKIMATE DEHYDROGENASE"/>
    <property type="match status" value="1"/>
</dbReference>
<dbReference type="Pfam" id="PF18317">
    <property type="entry name" value="SDH_C"/>
    <property type="match status" value="1"/>
</dbReference>
<dbReference type="Pfam" id="PF01488">
    <property type="entry name" value="Shikimate_DH"/>
    <property type="match status" value="1"/>
</dbReference>
<dbReference type="Pfam" id="PF08501">
    <property type="entry name" value="Shikimate_dh_N"/>
    <property type="match status" value="1"/>
</dbReference>
<dbReference type="SUPFAM" id="SSF53223">
    <property type="entry name" value="Aminoacid dehydrogenase-like, N-terminal domain"/>
    <property type="match status" value="1"/>
</dbReference>
<dbReference type="SUPFAM" id="SSF51735">
    <property type="entry name" value="NAD(P)-binding Rossmann-fold domains"/>
    <property type="match status" value="1"/>
</dbReference>
<protein>
    <recommendedName>
        <fullName evidence="1">Shikimate dehydrogenase (NADP(+))</fullName>
        <shortName evidence="1">SDH</shortName>
        <ecNumber evidence="1">1.1.1.25</ecNumber>
    </recommendedName>
</protein>
<evidence type="ECO:0000255" key="1">
    <source>
        <dbReference type="HAMAP-Rule" id="MF_00222"/>
    </source>
</evidence>
<sequence>MNTIPRYAVFGNPVAHSKSPQIHRQFALQEGVEIEYERICADIGGFAQAVEAFFANGGRGANVTVPFKQEAFALSDEHSERALAAGAVNTLILLENGKIRGDNTDGLGLTDDIAKRLGVEISDKTVLLLGAGGAVRGVIPVLKEYHPARIVIANRTHAKAAEMAVHFDIDAVPLDELEGGFDIIINGTSGGLSGQLPAVSPKIFEHCTLAYDMVYGEAAEPFLAFARQSGAKQTADGLGMLVGQAAASYRLWRGFAPDVLPVVQYMREL</sequence>
<organism>
    <name type="scientific">Neisseria pharyngis</name>
    <dbReference type="NCBI Taxonomy" id="29434"/>
    <lineage>
        <taxon>Bacteria</taxon>
        <taxon>Pseudomonadati</taxon>
        <taxon>Pseudomonadota</taxon>
        <taxon>Betaproteobacteria</taxon>
        <taxon>Neisseriales</taxon>
        <taxon>Neisseriaceae</taxon>
        <taxon>Neisseria</taxon>
    </lineage>
</organism>
<keyword id="KW-0028">Amino-acid biosynthesis</keyword>
<keyword id="KW-0057">Aromatic amino acid biosynthesis</keyword>
<keyword id="KW-0521">NADP</keyword>
<keyword id="KW-0560">Oxidoreductase</keyword>
<name>AROE_NEIPH</name>
<gene>
    <name evidence="1" type="primary">aroE</name>
</gene>
<reference key="1">
    <citation type="journal article" date="1997" name="Mol. Microbiol.">
        <title>Interspecies recombination, and phylogenetic distortions, within the glutamine synthetase and shikimate dehydrogenase genes of Neisseria meningitidis and commensal Neisseria species.</title>
        <authorList>
            <person name="Zhou J."/>
            <person name="Bowler L.D."/>
            <person name="Spratt B.G."/>
        </authorList>
    </citation>
    <scope>NUCLEOTIDE SEQUENCE [GENOMIC DNA]</scope>
    <source>
        <strain>NCTC 4590 / Flava</strain>
    </source>
</reference>